<name>RSXD_ECOSM</name>
<keyword id="KW-0997">Cell inner membrane</keyword>
<keyword id="KW-1003">Cell membrane</keyword>
<keyword id="KW-0249">Electron transport</keyword>
<keyword id="KW-0285">Flavoprotein</keyword>
<keyword id="KW-0288">FMN</keyword>
<keyword id="KW-0472">Membrane</keyword>
<keyword id="KW-0597">Phosphoprotein</keyword>
<keyword id="KW-1278">Translocase</keyword>
<keyword id="KW-0812">Transmembrane</keyword>
<keyword id="KW-1133">Transmembrane helix</keyword>
<keyword id="KW-0813">Transport</keyword>
<gene>
    <name evidence="1" type="primary">rsxD</name>
    <name type="synonym">rnfD</name>
    <name type="ordered locus">EcSMS35_1569</name>
</gene>
<evidence type="ECO:0000255" key="1">
    <source>
        <dbReference type="HAMAP-Rule" id="MF_00462"/>
    </source>
</evidence>
<protein>
    <recommendedName>
        <fullName evidence="1">Ion-translocating oxidoreductase complex subunit D</fullName>
        <ecNumber evidence="1">7.-.-.-</ecNumber>
    </recommendedName>
    <alternativeName>
        <fullName evidence="1">Rsx electron transport complex subunit D</fullName>
    </alternativeName>
</protein>
<organism>
    <name type="scientific">Escherichia coli (strain SMS-3-5 / SECEC)</name>
    <dbReference type="NCBI Taxonomy" id="439855"/>
    <lineage>
        <taxon>Bacteria</taxon>
        <taxon>Pseudomonadati</taxon>
        <taxon>Pseudomonadota</taxon>
        <taxon>Gammaproteobacteria</taxon>
        <taxon>Enterobacterales</taxon>
        <taxon>Enterobacteriaceae</taxon>
        <taxon>Escherichia</taxon>
    </lineage>
</organism>
<feature type="chain" id="PRO_1000125384" description="Ion-translocating oxidoreductase complex subunit D">
    <location>
        <begin position="1"/>
        <end position="352"/>
    </location>
</feature>
<feature type="transmembrane region" description="Helical" evidence="1">
    <location>
        <begin position="20"/>
        <end position="40"/>
    </location>
</feature>
<feature type="transmembrane region" description="Helical" evidence="1">
    <location>
        <begin position="42"/>
        <end position="62"/>
    </location>
</feature>
<feature type="transmembrane region" description="Helical" evidence="1">
    <location>
        <begin position="78"/>
        <end position="109"/>
    </location>
</feature>
<feature type="transmembrane region" description="Helical" evidence="1">
    <location>
        <begin position="123"/>
        <end position="143"/>
    </location>
</feature>
<feature type="transmembrane region" description="Helical" evidence="1">
    <location>
        <begin position="148"/>
        <end position="168"/>
    </location>
</feature>
<feature type="transmembrane region" description="Helical" evidence="1">
    <location>
        <begin position="215"/>
        <end position="235"/>
    </location>
</feature>
<feature type="transmembrane region" description="Helical" evidence="1">
    <location>
        <begin position="242"/>
        <end position="262"/>
    </location>
</feature>
<feature type="transmembrane region" description="Helical" evidence="1">
    <location>
        <begin position="267"/>
        <end position="287"/>
    </location>
</feature>
<feature type="transmembrane region" description="Helical" evidence="1">
    <location>
        <begin position="301"/>
        <end position="321"/>
    </location>
</feature>
<feature type="transmembrane region" description="Helical" evidence="1">
    <location>
        <begin position="322"/>
        <end position="342"/>
    </location>
</feature>
<feature type="modified residue" description="FMN phosphoryl threonine" evidence="1">
    <location>
        <position position="187"/>
    </location>
</feature>
<reference key="1">
    <citation type="journal article" date="2008" name="J. Bacteriol.">
        <title>Insights into the environmental resistance gene pool from the genome sequence of the multidrug-resistant environmental isolate Escherichia coli SMS-3-5.</title>
        <authorList>
            <person name="Fricke W.F."/>
            <person name="Wright M.S."/>
            <person name="Lindell A.H."/>
            <person name="Harkins D.M."/>
            <person name="Baker-Austin C."/>
            <person name="Ravel J."/>
            <person name="Stepanauskas R."/>
        </authorList>
    </citation>
    <scope>NUCLEOTIDE SEQUENCE [LARGE SCALE GENOMIC DNA]</scope>
    <source>
        <strain>SMS-3-5 / SECEC</strain>
    </source>
</reference>
<accession>B1LEQ6</accession>
<proteinExistence type="inferred from homology"/>
<dbReference type="EC" id="7.-.-.-" evidence="1"/>
<dbReference type="EMBL" id="CP000970">
    <property type="protein sequence ID" value="ACB18839.1"/>
    <property type="molecule type" value="Genomic_DNA"/>
</dbReference>
<dbReference type="RefSeq" id="WP_000231918.1">
    <property type="nucleotide sequence ID" value="NC_010498.1"/>
</dbReference>
<dbReference type="SMR" id="B1LEQ6"/>
<dbReference type="KEGG" id="ecm:EcSMS35_1569"/>
<dbReference type="HOGENOM" id="CLU_042020_0_0_6"/>
<dbReference type="Proteomes" id="UP000007011">
    <property type="component" value="Chromosome"/>
</dbReference>
<dbReference type="GO" id="GO:0005886">
    <property type="term" value="C:plasma membrane"/>
    <property type="evidence" value="ECO:0007669"/>
    <property type="project" value="UniProtKB-SubCell"/>
</dbReference>
<dbReference type="GO" id="GO:0022900">
    <property type="term" value="P:electron transport chain"/>
    <property type="evidence" value="ECO:0007669"/>
    <property type="project" value="UniProtKB-UniRule"/>
</dbReference>
<dbReference type="GO" id="GO:0055085">
    <property type="term" value="P:transmembrane transport"/>
    <property type="evidence" value="ECO:0007669"/>
    <property type="project" value="InterPro"/>
</dbReference>
<dbReference type="HAMAP" id="MF_00462">
    <property type="entry name" value="RsxD_RnfD"/>
    <property type="match status" value="1"/>
</dbReference>
<dbReference type="InterPro" id="IPR004338">
    <property type="entry name" value="NqrB/RnfD"/>
</dbReference>
<dbReference type="InterPro" id="IPR011303">
    <property type="entry name" value="RnfD_bac"/>
</dbReference>
<dbReference type="NCBIfam" id="NF002011">
    <property type="entry name" value="PRK00816.1"/>
    <property type="match status" value="1"/>
</dbReference>
<dbReference type="NCBIfam" id="TIGR01946">
    <property type="entry name" value="rnfD"/>
    <property type="match status" value="1"/>
</dbReference>
<dbReference type="PANTHER" id="PTHR30578">
    <property type="entry name" value="ELECTRON TRANSPORT COMPLEX PROTEIN RNFD"/>
    <property type="match status" value="1"/>
</dbReference>
<dbReference type="PANTHER" id="PTHR30578:SF0">
    <property type="entry name" value="ION-TRANSLOCATING OXIDOREDUCTASE COMPLEX SUBUNIT D"/>
    <property type="match status" value="1"/>
</dbReference>
<dbReference type="Pfam" id="PF03116">
    <property type="entry name" value="NQR2_RnfD_RnfE"/>
    <property type="match status" value="1"/>
</dbReference>
<comment type="function">
    <text evidence="1">Part of a membrane-bound complex that couples electron transfer with translocation of ions across the membrane. Required to maintain the reduced state of SoxR.</text>
</comment>
<comment type="cofactor">
    <cofactor evidence="1">
        <name>FMN</name>
        <dbReference type="ChEBI" id="CHEBI:58210"/>
    </cofactor>
</comment>
<comment type="subunit">
    <text evidence="1">The complex is composed of six subunits: RsxA, RsxB, RsxC, RsxD, RsxE and RsxG.</text>
</comment>
<comment type="subcellular location">
    <subcellularLocation>
        <location evidence="1">Cell inner membrane</location>
        <topology evidence="1">Multi-pass membrane protein</topology>
    </subcellularLocation>
</comment>
<comment type="similarity">
    <text evidence="1">Belongs to the NqrB/RnfD family.</text>
</comment>
<sequence>MVFRIASSPYTHNQRQTSRIMLLVLLAAVPGIAAQLWFFGWGTLVQILLASVSALLAEALVLKLRKQSVAATLKDNSALLTGLLLAVSIPPLAPWWMVVLGTVFAVIIAKQLYGGLGQNPFNPAMIGYVVLLISFPVQMTSWLPPHEIAVNIPGFIDAIQVIFSGHITSGGDMNTLRLGIDGISQATPLDTFKTSVRAGHSVEQIMQYPIYSGMLAGVGWQWVNLAWLAGGVWLLWQKAIRWHIPLSFLVTLALCATLGWLFSPETLAAPQIHLLSGATMLGAFFILTDPVTASTTNRGRLIFGALAGLLVWLIRSFGGYPDGVAFAVLLANITVPLIDYYTRPRVYGHRKG</sequence>